<keyword id="KW-0067">ATP-binding</keyword>
<keyword id="KW-0547">Nucleotide-binding</keyword>
<keyword id="KW-0548">Nucleotidyltransferase</keyword>
<keyword id="KW-0808">Transferase</keyword>
<evidence type="ECO:0000255" key="1">
    <source>
        <dbReference type="HAMAP-Rule" id="MF_00064"/>
    </source>
</evidence>
<organism>
    <name type="scientific">Salmonella paratyphi A (strain AKU_12601)</name>
    <dbReference type="NCBI Taxonomy" id="554290"/>
    <lineage>
        <taxon>Bacteria</taxon>
        <taxon>Pseudomonadati</taxon>
        <taxon>Pseudomonadota</taxon>
        <taxon>Gammaproteobacteria</taxon>
        <taxon>Enterobacterales</taxon>
        <taxon>Enterobacteriaceae</taxon>
        <taxon>Salmonella</taxon>
    </lineage>
</organism>
<sequence>MDQKRLTHLRQLETESIHIIREVAAEFANPVMLYSIGKDSSVMLHLARKAFYPGTLPFPLLHVDTGWKFREMYAFRDRTANAYGCELLVHKNPEGVAMGINPFVHGSAKHTDIMKTEGLKQALNKYGFDAAFGGARRDEEKSRAKERIYSFRDRFHRWDPKNQRPELWRNYNGQINKGESIRVFPLSNWTEQDIWQYIWLENIDIVPLYLAAERPVLERDGMLMMVDDDRIDLQPGEVIKKRMVRFRTLGCWPLTGAVESHAQTLPEIIEEMLVSTTSERQGRMIDRDQAGSMELKKRQGYF</sequence>
<protein>
    <recommendedName>
        <fullName evidence="1">Sulfate adenylyltransferase subunit 2</fullName>
        <ecNumber evidence="1">2.7.7.4</ecNumber>
    </recommendedName>
    <alternativeName>
        <fullName evidence="1">ATP-sulfurylase small subunit</fullName>
    </alternativeName>
    <alternativeName>
        <fullName evidence="1">Sulfate adenylate transferase</fullName>
        <shortName evidence="1">SAT</shortName>
    </alternativeName>
</protein>
<name>CYSD_SALPK</name>
<dbReference type="EC" id="2.7.7.4" evidence="1"/>
<dbReference type="EMBL" id="FM200053">
    <property type="protein sequence ID" value="CAR60841.1"/>
    <property type="molecule type" value="Genomic_DNA"/>
</dbReference>
<dbReference type="RefSeq" id="WP_000372402.1">
    <property type="nucleotide sequence ID" value="NC_011147.1"/>
</dbReference>
<dbReference type="SMR" id="B5BEY9"/>
<dbReference type="KEGG" id="sek:SSPA2603"/>
<dbReference type="HOGENOM" id="CLU_043026_0_0_6"/>
<dbReference type="UniPathway" id="UPA00140">
    <property type="reaction ID" value="UER00204"/>
</dbReference>
<dbReference type="Proteomes" id="UP000001869">
    <property type="component" value="Chromosome"/>
</dbReference>
<dbReference type="GO" id="GO:0005524">
    <property type="term" value="F:ATP binding"/>
    <property type="evidence" value="ECO:0007669"/>
    <property type="project" value="UniProtKB-KW"/>
</dbReference>
<dbReference type="GO" id="GO:0004781">
    <property type="term" value="F:sulfate adenylyltransferase (ATP) activity"/>
    <property type="evidence" value="ECO:0007669"/>
    <property type="project" value="UniProtKB-UniRule"/>
</dbReference>
<dbReference type="GO" id="GO:0070814">
    <property type="term" value="P:hydrogen sulfide biosynthetic process"/>
    <property type="evidence" value="ECO:0007669"/>
    <property type="project" value="UniProtKB-UniRule"/>
</dbReference>
<dbReference type="GO" id="GO:0000103">
    <property type="term" value="P:sulfate assimilation"/>
    <property type="evidence" value="ECO:0007669"/>
    <property type="project" value="UniProtKB-UniRule"/>
</dbReference>
<dbReference type="CDD" id="cd23946">
    <property type="entry name" value="Sulfate_adenylyltransferase_2"/>
    <property type="match status" value="1"/>
</dbReference>
<dbReference type="FunFam" id="3.40.50.620:FF:000002">
    <property type="entry name" value="Sulfate adenylyltransferase subunit 2"/>
    <property type="match status" value="1"/>
</dbReference>
<dbReference type="Gene3D" id="3.40.50.620">
    <property type="entry name" value="HUPs"/>
    <property type="match status" value="1"/>
</dbReference>
<dbReference type="HAMAP" id="MF_00064">
    <property type="entry name" value="Sulf_adenylyltr_sub2"/>
    <property type="match status" value="1"/>
</dbReference>
<dbReference type="InterPro" id="IPR002500">
    <property type="entry name" value="PAPS_reduct_dom"/>
</dbReference>
<dbReference type="InterPro" id="IPR014729">
    <property type="entry name" value="Rossmann-like_a/b/a_fold"/>
</dbReference>
<dbReference type="InterPro" id="IPR011784">
    <property type="entry name" value="SO4_adenylTrfase_ssu"/>
</dbReference>
<dbReference type="InterPro" id="IPR050128">
    <property type="entry name" value="Sulfate_adenylyltrnsfr_sub2"/>
</dbReference>
<dbReference type="NCBIfam" id="TIGR02039">
    <property type="entry name" value="CysD"/>
    <property type="match status" value="1"/>
</dbReference>
<dbReference type="NCBIfam" id="NF003587">
    <property type="entry name" value="PRK05253.1"/>
    <property type="match status" value="1"/>
</dbReference>
<dbReference type="NCBIfam" id="NF009214">
    <property type="entry name" value="PRK12563.1"/>
    <property type="match status" value="1"/>
</dbReference>
<dbReference type="PANTHER" id="PTHR43196">
    <property type="entry name" value="SULFATE ADENYLYLTRANSFERASE SUBUNIT 2"/>
    <property type="match status" value="1"/>
</dbReference>
<dbReference type="PANTHER" id="PTHR43196:SF1">
    <property type="entry name" value="SULFATE ADENYLYLTRANSFERASE SUBUNIT 2"/>
    <property type="match status" value="1"/>
</dbReference>
<dbReference type="Pfam" id="PF01507">
    <property type="entry name" value="PAPS_reduct"/>
    <property type="match status" value="1"/>
</dbReference>
<dbReference type="PIRSF" id="PIRSF002936">
    <property type="entry name" value="CysDAde_trans"/>
    <property type="match status" value="1"/>
</dbReference>
<dbReference type="SUPFAM" id="SSF52402">
    <property type="entry name" value="Adenine nucleotide alpha hydrolases-like"/>
    <property type="match status" value="1"/>
</dbReference>
<feature type="chain" id="PRO_1000092224" description="Sulfate adenylyltransferase subunit 2">
    <location>
        <begin position="1"/>
        <end position="302"/>
    </location>
</feature>
<proteinExistence type="inferred from homology"/>
<gene>
    <name evidence="1" type="primary">cysD</name>
    <name type="ordered locus">SSPA2603</name>
</gene>
<comment type="function">
    <text evidence="1">With CysN forms the ATP sulfurylase (ATPS) that catalyzes the adenylation of sulfate producing adenosine 5'-phosphosulfate (APS) and diphosphate, the first enzymatic step in sulfur assimilation pathway. APS synthesis involves the formation of a high-energy phosphoric-sulfuric acid anhydride bond driven by GTP hydrolysis by CysN coupled to ATP hydrolysis by CysD.</text>
</comment>
<comment type="catalytic activity">
    <reaction evidence="1">
        <text>sulfate + ATP + H(+) = adenosine 5'-phosphosulfate + diphosphate</text>
        <dbReference type="Rhea" id="RHEA:18133"/>
        <dbReference type="ChEBI" id="CHEBI:15378"/>
        <dbReference type="ChEBI" id="CHEBI:16189"/>
        <dbReference type="ChEBI" id="CHEBI:30616"/>
        <dbReference type="ChEBI" id="CHEBI:33019"/>
        <dbReference type="ChEBI" id="CHEBI:58243"/>
        <dbReference type="EC" id="2.7.7.4"/>
    </reaction>
</comment>
<comment type="pathway">
    <text evidence="1">Sulfur metabolism; hydrogen sulfide biosynthesis; sulfite from sulfate: step 1/3.</text>
</comment>
<comment type="subunit">
    <text evidence="1">Heterodimer composed of CysD, the smaller subunit, and CysN.</text>
</comment>
<comment type="similarity">
    <text evidence="1">Belongs to the PAPS reductase family. CysD subfamily.</text>
</comment>
<accession>B5BEY9</accession>
<reference key="1">
    <citation type="journal article" date="2009" name="BMC Genomics">
        <title>Pseudogene accumulation in the evolutionary histories of Salmonella enterica serovars Paratyphi A and Typhi.</title>
        <authorList>
            <person name="Holt K.E."/>
            <person name="Thomson N.R."/>
            <person name="Wain J."/>
            <person name="Langridge G.C."/>
            <person name="Hasan R."/>
            <person name="Bhutta Z.A."/>
            <person name="Quail M.A."/>
            <person name="Norbertczak H."/>
            <person name="Walker D."/>
            <person name="Simmonds M."/>
            <person name="White B."/>
            <person name="Bason N."/>
            <person name="Mungall K."/>
            <person name="Dougan G."/>
            <person name="Parkhill J."/>
        </authorList>
    </citation>
    <scope>NUCLEOTIDE SEQUENCE [LARGE SCALE GENOMIC DNA]</scope>
    <source>
        <strain>AKU_12601</strain>
    </source>
</reference>